<dbReference type="EMBL" id="CU329672">
    <property type="protein sequence ID" value="CAB61504.2"/>
    <property type="molecule type" value="Genomic_DNA"/>
</dbReference>
<dbReference type="PIR" id="T41352">
    <property type="entry name" value="T41352"/>
</dbReference>
<dbReference type="RefSeq" id="NP_588400.2">
    <property type="nucleotide sequence ID" value="NM_001023391.2"/>
</dbReference>
<dbReference type="BioGRID" id="275812">
    <property type="interactions" value="339"/>
</dbReference>
<dbReference type="STRING" id="284812.Q9URT4"/>
<dbReference type="iPTMnet" id="Q9URT4"/>
<dbReference type="PaxDb" id="4896-SPCC290.04.1"/>
<dbReference type="EnsemblFungi" id="SPCC290.04.1">
    <property type="protein sequence ID" value="SPCC290.04.1:pep"/>
    <property type="gene ID" value="SPCC290.04"/>
</dbReference>
<dbReference type="GeneID" id="2539242"/>
<dbReference type="KEGG" id="spo:2539242"/>
<dbReference type="PomBase" id="SPCC290.04">
    <property type="gene designation" value="ams2"/>
</dbReference>
<dbReference type="VEuPathDB" id="FungiDB:SPCC290.04"/>
<dbReference type="eggNOG" id="ENOG502QUGJ">
    <property type="taxonomic scope" value="Eukaryota"/>
</dbReference>
<dbReference type="HOGENOM" id="CLU_404984_0_0_1"/>
<dbReference type="InParanoid" id="Q9URT4"/>
<dbReference type="OMA" id="KTANWRN"/>
<dbReference type="PRO" id="PR:Q9URT4"/>
<dbReference type="Proteomes" id="UP000002485">
    <property type="component" value="Chromosome III"/>
</dbReference>
<dbReference type="GO" id="GO:0000785">
    <property type="term" value="C:chromatin"/>
    <property type="evidence" value="ECO:0000314"/>
    <property type="project" value="PomBase"/>
</dbReference>
<dbReference type="GO" id="GO:0034506">
    <property type="term" value="C:chromosome, centromeric core domain"/>
    <property type="evidence" value="ECO:0000314"/>
    <property type="project" value="PomBase"/>
</dbReference>
<dbReference type="GO" id="GO:0005634">
    <property type="term" value="C:nucleus"/>
    <property type="evidence" value="ECO:0007005"/>
    <property type="project" value="PomBase"/>
</dbReference>
<dbReference type="GO" id="GO:0019237">
    <property type="term" value="F:centromeric DNA binding"/>
    <property type="evidence" value="ECO:0000314"/>
    <property type="project" value="PomBase"/>
</dbReference>
<dbReference type="GO" id="GO:0001228">
    <property type="term" value="F:DNA-binding transcription activator activity, RNA polymerase II-specific"/>
    <property type="evidence" value="ECO:0000315"/>
    <property type="project" value="PomBase"/>
</dbReference>
<dbReference type="GO" id="GO:0000978">
    <property type="term" value="F:RNA polymerase II cis-regulatory region sequence-specific DNA binding"/>
    <property type="evidence" value="ECO:0000269"/>
    <property type="project" value="PomBase"/>
</dbReference>
<dbReference type="GO" id="GO:0008270">
    <property type="term" value="F:zinc ion binding"/>
    <property type="evidence" value="ECO:0007669"/>
    <property type="project" value="UniProtKB-KW"/>
</dbReference>
<dbReference type="GO" id="GO:0034080">
    <property type="term" value="P:CENP-A containing chromatin assembly"/>
    <property type="evidence" value="ECO:0000315"/>
    <property type="project" value="PomBase"/>
</dbReference>
<dbReference type="GO" id="GO:0045944">
    <property type="term" value="P:positive regulation of transcription by RNA polymerase II"/>
    <property type="evidence" value="ECO:0000315"/>
    <property type="project" value="PomBase"/>
</dbReference>
<dbReference type="CDD" id="cd00202">
    <property type="entry name" value="ZnF_GATA"/>
    <property type="match status" value="1"/>
</dbReference>
<dbReference type="FunFam" id="3.30.50.10:FF:000059">
    <property type="entry name" value="Similar to transcription factor Zn, GATA"/>
    <property type="match status" value="1"/>
</dbReference>
<dbReference type="Gene3D" id="3.30.50.10">
    <property type="entry name" value="Erythroid Transcription Factor GATA-1, subunit A"/>
    <property type="match status" value="1"/>
</dbReference>
<dbReference type="InterPro" id="IPR042403">
    <property type="entry name" value="Spt21/Ams2"/>
</dbReference>
<dbReference type="InterPro" id="IPR000679">
    <property type="entry name" value="Znf_GATA"/>
</dbReference>
<dbReference type="InterPro" id="IPR013088">
    <property type="entry name" value="Znf_NHR/GATA"/>
</dbReference>
<dbReference type="PANTHER" id="PTHR39147">
    <property type="entry name" value="PROTEIN SPT21"/>
    <property type="match status" value="1"/>
</dbReference>
<dbReference type="PANTHER" id="PTHR39147:SF1">
    <property type="entry name" value="PROTEIN SPT21"/>
    <property type="match status" value="1"/>
</dbReference>
<dbReference type="Pfam" id="PF00320">
    <property type="entry name" value="GATA"/>
    <property type="match status" value="1"/>
</dbReference>
<dbReference type="SMART" id="SM00401">
    <property type="entry name" value="ZnF_GATA"/>
    <property type="match status" value="1"/>
</dbReference>
<dbReference type="SUPFAM" id="SSF57716">
    <property type="entry name" value="Glucocorticoid receptor-like (DNA-binding domain)"/>
    <property type="match status" value="1"/>
</dbReference>
<dbReference type="PROSITE" id="PS00344">
    <property type="entry name" value="GATA_ZN_FINGER_1"/>
    <property type="match status" value="1"/>
</dbReference>
<dbReference type="PROSITE" id="PS50114">
    <property type="entry name" value="GATA_ZN_FINGER_2"/>
    <property type="match status" value="1"/>
</dbReference>
<proteinExistence type="evidence at protein level"/>
<gene>
    <name type="primary">ams2</name>
    <name type="ORF">SPCC290.04</name>
    <name type="ORF">SPCC4F11.01</name>
</gene>
<feature type="chain" id="PRO_0000083474" description="CENP-A multicopy suppressor protein 2">
    <location>
        <begin position="1"/>
        <end position="697"/>
    </location>
</feature>
<feature type="zinc finger region" description="GATA-type; atypical" evidence="1">
    <location>
        <begin position="351"/>
        <end position="378"/>
    </location>
</feature>
<feature type="region of interest" description="Disordered" evidence="2">
    <location>
        <begin position="443"/>
        <end position="484"/>
    </location>
</feature>
<feature type="compositionally biased region" description="Polar residues" evidence="2">
    <location>
        <begin position="445"/>
        <end position="455"/>
    </location>
</feature>
<protein>
    <recommendedName>
        <fullName>CENP-A multicopy suppressor protein 2</fullName>
    </recommendedName>
</protein>
<sequence>MMEKSLNTVTSLPLRVIYCIDRASAIRCLAKSQHAVPIQVLKEVEPKKVICQVDIQHVIQTVCRCSPELSCKSQGDFSVYFLDHTEPDELFVGLGYWSSLLLSPTLNAGTSNSDTVWVNGFIVEFGIQRSIEIKLRFQSLQNSFEVGTPETHTSSKFLSSTLPPSLIFDPSSSEKSDSISGSLFDTNYTCPVNINGLSKQKSVRELKSPSRPSALAETNVEELELDSLFHASNDISCSATSFSEPYILDHQAALDHPATDPVCSASSTTVNSAVSTKKRRRESSTISPESAYVAAQLQNPSEREQVHEFIKEQVRIARGRIEKKFTNVRGKNRIEEQLTLSLQEGKIPPYCQNCGTIKTANWRNATYMNITLMLCNACGIYWTSRRSMRPRNLWSTYKAFETEKPLENDAFAQLELAVYKLSQQRKLSISIFRELENAGRHSPLNRLTSLDSTHSAPDPNHISKPSVVNQQKSRGGPRTAKLKNDLRRIQSSPIVAPTPDTSFREPLSEIGSNDSWLVLPNSLSANIQNDVLRKTDFMCTDKENVAFPLKTTTKPMPKVNKEETEPTLPVCDSEKENDDLECYFRTPPKPTTLQKQQQSPSPWRSELFLSDPDQNVLTPRHKPKFDLSKALSSVAKSNNIENSPQLPERYDFSLELGLNSQLDNEERRDIPLMTDLVMPSSPPMVPADRHLSVENTC</sequence>
<evidence type="ECO:0000255" key="1">
    <source>
        <dbReference type="PROSITE-ProRule" id="PRU00094"/>
    </source>
</evidence>
<evidence type="ECO:0000256" key="2">
    <source>
        <dbReference type="SAM" id="MobiDB-lite"/>
    </source>
</evidence>
<evidence type="ECO:0000269" key="3">
    <source>
    </source>
</evidence>
<name>AMS2_SCHPO</name>
<reference key="1">
    <citation type="journal article" date="2002" name="Nature">
        <title>The genome sequence of Schizosaccharomyces pombe.</title>
        <authorList>
            <person name="Wood V."/>
            <person name="Gwilliam R."/>
            <person name="Rajandream M.A."/>
            <person name="Lyne M.H."/>
            <person name="Lyne R."/>
            <person name="Stewart A."/>
            <person name="Sgouros J.G."/>
            <person name="Peat N."/>
            <person name="Hayles J."/>
            <person name="Baker S.G."/>
            <person name="Basham D."/>
            <person name="Bowman S."/>
            <person name="Brooks K."/>
            <person name="Brown D."/>
            <person name="Brown S."/>
            <person name="Chillingworth T."/>
            <person name="Churcher C.M."/>
            <person name="Collins M."/>
            <person name="Connor R."/>
            <person name="Cronin A."/>
            <person name="Davis P."/>
            <person name="Feltwell T."/>
            <person name="Fraser A."/>
            <person name="Gentles S."/>
            <person name="Goble A."/>
            <person name="Hamlin N."/>
            <person name="Harris D.E."/>
            <person name="Hidalgo J."/>
            <person name="Hodgson G."/>
            <person name="Holroyd S."/>
            <person name="Hornsby T."/>
            <person name="Howarth S."/>
            <person name="Huckle E.J."/>
            <person name="Hunt S."/>
            <person name="Jagels K."/>
            <person name="James K.D."/>
            <person name="Jones L."/>
            <person name="Jones M."/>
            <person name="Leather S."/>
            <person name="McDonald S."/>
            <person name="McLean J."/>
            <person name="Mooney P."/>
            <person name="Moule S."/>
            <person name="Mungall K.L."/>
            <person name="Murphy L.D."/>
            <person name="Niblett D."/>
            <person name="Odell C."/>
            <person name="Oliver K."/>
            <person name="O'Neil S."/>
            <person name="Pearson D."/>
            <person name="Quail M.A."/>
            <person name="Rabbinowitsch E."/>
            <person name="Rutherford K.M."/>
            <person name="Rutter S."/>
            <person name="Saunders D."/>
            <person name="Seeger K."/>
            <person name="Sharp S."/>
            <person name="Skelton J."/>
            <person name="Simmonds M.N."/>
            <person name="Squares R."/>
            <person name="Squares S."/>
            <person name="Stevens K."/>
            <person name="Taylor K."/>
            <person name="Taylor R.G."/>
            <person name="Tivey A."/>
            <person name="Walsh S.V."/>
            <person name="Warren T."/>
            <person name="Whitehead S."/>
            <person name="Woodward J.R."/>
            <person name="Volckaert G."/>
            <person name="Aert R."/>
            <person name="Robben J."/>
            <person name="Grymonprez B."/>
            <person name="Weltjens I."/>
            <person name="Vanstreels E."/>
            <person name="Rieger M."/>
            <person name="Schaefer M."/>
            <person name="Mueller-Auer S."/>
            <person name="Gabel C."/>
            <person name="Fuchs M."/>
            <person name="Duesterhoeft A."/>
            <person name="Fritzc C."/>
            <person name="Holzer E."/>
            <person name="Moestl D."/>
            <person name="Hilbert H."/>
            <person name="Borzym K."/>
            <person name="Langer I."/>
            <person name="Beck A."/>
            <person name="Lehrach H."/>
            <person name="Reinhardt R."/>
            <person name="Pohl T.M."/>
            <person name="Eger P."/>
            <person name="Zimmermann W."/>
            <person name="Wedler H."/>
            <person name="Wambutt R."/>
            <person name="Purnelle B."/>
            <person name="Goffeau A."/>
            <person name="Cadieu E."/>
            <person name="Dreano S."/>
            <person name="Gloux S."/>
            <person name="Lelaure V."/>
            <person name="Mottier S."/>
            <person name="Galibert F."/>
            <person name="Aves S.J."/>
            <person name="Xiang Z."/>
            <person name="Hunt C."/>
            <person name="Moore K."/>
            <person name="Hurst S.M."/>
            <person name="Lucas M."/>
            <person name="Rochet M."/>
            <person name="Gaillardin C."/>
            <person name="Tallada V.A."/>
            <person name="Garzon A."/>
            <person name="Thode G."/>
            <person name="Daga R.R."/>
            <person name="Cruzado L."/>
            <person name="Jimenez J."/>
            <person name="Sanchez M."/>
            <person name="del Rey F."/>
            <person name="Benito J."/>
            <person name="Dominguez A."/>
            <person name="Revuelta J.L."/>
            <person name="Moreno S."/>
            <person name="Armstrong J."/>
            <person name="Forsburg S.L."/>
            <person name="Cerutti L."/>
            <person name="Lowe T."/>
            <person name="McCombie W.R."/>
            <person name="Paulsen I."/>
            <person name="Potashkin J."/>
            <person name="Shpakovski G.V."/>
            <person name="Ussery D."/>
            <person name="Barrell B.G."/>
            <person name="Nurse P."/>
        </authorList>
    </citation>
    <scope>NUCLEOTIDE SEQUENCE [LARGE SCALE GENOMIC DNA]</scope>
    <source>
        <strain>972 / ATCC 24843</strain>
    </source>
</reference>
<reference key="2">
    <citation type="journal article" date="2003" name="Mol. Cell">
        <title>A cell cycle-regulated GATA factor promotes centromeric localization of CENP-A in fission yeast.</title>
        <authorList>
            <person name="Chen E.S."/>
            <person name="Saitoh S."/>
            <person name="Yanagida M."/>
            <person name="Takahashi K."/>
        </authorList>
    </citation>
    <scope>FUNCTION</scope>
    <scope>SUBUNIT</scope>
    <scope>SUBCELLULAR LOCATION</scope>
</reference>
<accession>Q9URT4</accession>
<accession>Q9P7Z1</accession>
<keyword id="KW-0137">Centromere</keyword>
<keyword id="KW-0158">Chromosome</keyword>
<keyword id="KW-0238">DNA-binding</keyword>
<keyword id="KW-0479">Metal-binding</keyword>
<keyword id="KW-0539">Nucleus</keyword>
<keyword id="KW-1185">Reference proteome</keyword>
<keyword id="KW-0804">Transcription</keyword>
<keyword id="KW-0805">Transcription regulation</keyword>
<keyword id="KW-0862">Zinc</keyword>
<keyword id="KW-0863">Zinc-finger</keyword>
<organism>
    <name type="scientific">Schizosaccharomyces pombe (strain 972 / ATCC 24843)</name>
    <name type="common">Fission yeast</name>
    <dbReference type="NCBI Taxonomy" id="284812"/>
    <lineage>
        <taxon>Eukaryota</taxon>
        <taxon>Fungi</taxon>
        <taxon>Dikarya</taxon>
        <taxon>Ascomycota</taxon>
        <taxon>Taphrinomycotina</taxon>
        <taxon>Schizosaccharomycetes</taxon>
        <taxon>Schizosaccharomycetales</taxon>
        <taxon>Schizosaccharomycetaceae</taxon>
        <taxon>Schizosaccharomyces</taxon>
    </lineage>
</organism>
<comment type="function">
    <text evidence="3">Required for proper chromosome segregation via regulation of CENP-A localization to the centromere.</text>
</comment>
<comment type="subunit">
    <text evidence="3">Interacts with CENP-A.</text>
</comment>
<comment type="subcellular location">
    <subcellularLocation>
        <location evidence="3">Nucleus</location>
    </subcellularLocation>
    <subcellularLocation>
        <location evidence="3">Chromosome</location>
        <location evidence="3">Centromere</location>
    </subcellularLocation>
</comment>